<proteinExistence type="inferred from homology"/>
<feature type="chain" id="PRO_1000185778" description="Na(+)/H(+) antiporter NhaB">
    <location>
        <begin position="1"/>
        <end position="513"/>
    </location>
</feature>
<feature type="transmembrane region" description="Helical" evidence="1">
    <location>
        <begin position="23"/>
        <end position="43"/>
    </location>
</feature>
<feature type="transmembrane region" description="Helical" evidence="1">
    <location>
        <begin position="52"/>
        <end position="72"/>
    </location>
</feature>
<feature type="transmembrane region" description="Helical" evidence="1">
    <location>
        <begin position="97"/>
        <end position="117"/>
    </location>
</feature>
<feature type="transmembrane region" description="Helical" evidence="1">
    <location>
        <begin position="120"/>
        <end position="140"/>
    </location>
</feature>
<feature type="transmembrane region" description="Helical" evidence="1">
    <location>
        <begin position="144"/>
        <end position="164"/>
    </location>
</feature>
<feature type="transmembrane region" description="Helical" evidence="1">
    <location>
        <begin position="202"/>
        <end position="222"/>
    </location>
</feature>
<feature type="transmembrane region" description="Helical" evidence="1">
    <location>
        <begin position="238"/>
        <end position="258"/>
    </location>
</feature>
<feature type="transmembrane region" description="Helical" evidence="1">
    <location>
        <begin position="303"/>
        <end position="323"/>
    </location>
</feature>
<feature type="transmembrane region" description="Helical" evidence="1">
    <location>
        <begin position="348"/>
        <end position="368"/>
    </location>
</feature>
<feature type="transmembrane region" description="Helical" evidence="1">
    <location>
        <begin position="391"/>
        <end position="411"/>
    </location>
</feature>
<feature type="transmembrane region" description="Helical" evidence="1">
    <location>
        <begin position="447"/>
        <end position="467"/>
    </location>
</feature>
<feature type="transmembrane region" description="Helical" evidence="1">
    <location>
        <begin position="475"/>
        <end position="495"/>
    </location>
</feature>
<reference key="1">
    <citation type="journal article" date="2009" name="PLoS Genet.">
        <title>Organised genome dynamics in the Escherichia coli species results in highly diverse adaptive paths.</title>
        <authorList>
            <person name="Touchon M."/>
            <person name="Hoede C."/>
            <person name="Tenaillon O."/>
            <person name="Barbe V."/>
            <person name="Baeriswyl S."/>
            <person name="Bidet P."/>
            <person name="Bingen E."/>
            <person name="Bonacorsi S."/>
            <person name="Bouchier C."/>
            <person name="Bouvet O."/>
            <person name="Calteau A."/>
            <person name="Chiapello H."/>
            <person name="Clermont O."/>
            <person name="Cruveiller S."/>
            <person name="Danchin A."/>
            <person name="Diard M."/>
            <person name="Dossat C."/>
            <person name="Karoui M.E."/>
            <person name="Frapy E."/>
            <person name="Garry L."/>
            <person name="Ghigo J.M."/>
            <person name="Gilles A.M."/>
            <person name="Johnson J."/>
            <person name="Le Bouguenec C."/>
            <person name="Lescat M."/>
            <person name="Mangenot S."/>
            <person name="Martinez-Jehanne V."/>
            <person name="Matic I."/>
            <person name="Nassif X."/>
            <person name="Oztas S."/>
            <person name="Petit M.A."/>
            <person name="Pichon C."/>
            <person name="Rouy Z."/>
            <person name="Ruf C.S."/>
            <person name="Schneider D."/>
            <person name="Tourret J."/>
            <person name="Vacherie B."/>
            <person name="Vallenet D."/>
            <person name="Medigue C."/>
            <person name="Rocha E.P.C."/>
            <person name="Denamur E."/>
        </authorList>
    </citation>
    <scope>NUCLEOTIDE SEQUENCE [LARGE SCALE GENOMIC DNA]</scope>
    <source>
        <strain>ED1a</strain>
    </source>
</reference>
<protein>
    <recommendedName>
        <fullName evidence="1">Na(+)/H(+) antiporter NhaB</fullName>
    </recommendedName>
    <alternativeName>
        <fullName evidence="1">Sodium/proton antiporter NhaB</fullName>
    </alternativeName>
</protein>
<organism>
    <name type="scientific">Escherichia coli O81 (strain ED1a)</name>
    <dbReference type="NCBI Taxonomy" id="585397"/>
    <lineage>
        <taxon>Bacteria</taxon>
        <taxon>Pseudomonadati</taxon>
        <taxon>Pseudomonadota</taxon>
        <taxon>Gammaproteobacteria</taxon>
        <taxon>Enterobacterales</taxon>
        <taxon>Enterobacteriaceae</taxon>
        <taxon>Escherichia</taxon>
    </lineage>
</organism>
<comment type="function">
    <text evidence="1">Na(+)/H(+) antiporter that extrudes sodium in exchange for external protons.</text>
</comment>
<comment type="catalytic activity">
    <reaction evidence="1">
        <text>2 Na(+)(in) + 3 H(+)(out) = 2 Na(+)(out) + 3 H(+)(in)</text>
        <dbReference type="Rhea" id="RHEA:29247"/>
        <dbReference type="ChEBI" id="CHEBI:15378"/>
        <dbReference type="ChEBI" id="CHEBI:29101"/>
    </reaction>
    <physiologicalReaction direction="left-to-right" evidence="1">
        <dbReference type="Rhea" id="RHEA:29248"/>
    </physiologicalReaction>
</comment>
<comment type="subcellular location">
    <subcellularLocation>
        <location evidence="1">Cell inner membrane</location>
        <topology evidence="1">Multi-pass membrane protein</topology>
    </subcellularLocation>
</comment>
<comment type="similarity">
    <text evidence="1">Belongs to the NhaB Na(+)/H(+) (TC 2.A.34) antiporter family.</text>
</comment>
<accession>B7MTW4</accession>
<keyword id="KW-0050">Antiport</keyword>
<keyword id="KW-0997">Cell inner membrane</keyword>
<keyword id="KW-1003">Cell membrane</keyword>
<keyword id="KW-0406">Ion transport</keyword>
<keyword id="KW-0472">Membrane</keyword>
<keyword id="KW-0915">Sodium</keyword>
<keyword id="KW-0739">Sodium transport</keyword>
<keyword id="KW-0812">Transmembrane</keyword>
<keyword id="KW-1133">Transmembrane helix</keyword>
<keyword id="KW-0813">Transport</keyword>
<dbReference type="EMBL" id="CU928162">
    <property type="protein sequence ID" value="CAR07528.1"/>
    <property type="molecule type" value="Genomic_DNA"/>
</dbReference>
<dbReference type="RefSeq" id="WP_000406401.1">
    <property type="nucleotide sequence ID" value="NC_011745.1"/>
</dbReference>
<dbReference type="SMR" id="B7MTW4"/>
<dbReference type="KEGG" id="ecq:ECED1_1328"/>
<dbReference type="HOGENOM" id="CLU_041110_0_0_6"/>
<dbReference type="Proteomes" id="UP000000748">
    <property type="component" value="Chromosome"/>
</dbReference>
<dbReference type="GO" id="GO:0005886">
    <property type="term" value="C:plasma membrane"/>
    <property type="evidence" value="ECO:0007669"/>
    <property type="project" value="UniProtKB-SubCell"/>
</dbReference>
<dbReference type="GO" id="GO:0015385">
    <property type="term" value="F:sodium:proton antiporter activity"/>
    <property type="evidence" value="ECO:0007669"/>
    <property type="project" value="InterPro"/>
</dbReference>
<dbReference type="HAMAP" id="MF_01599">
    <property type="entry name" value="NhaB"/>
    <property type="match status" value="1"/>
</dbReference>
<dbReference type="InterPro" id="IPR004671">
    <property type="entry name" value="Na+/H+_antiporter_NhaB"/>
</dbReference>
<dbReference type="NCBIfam" id="TIGR00774">
    <property type="entry name" value="NhaB"/>
    <property type="match status" value="1"/>
</dbReference>
<dbReference type="NCBIfam" id="NF007093">
    <property type="entry name" value="PRK09547.1"/>
    <property type="match status" value="1"/>
</dbReference>
<dbReference type="PANTHER" id="PTHR43302:SF1">
    <property type="entry name" value="NA(+)_H(+) ANTIPORTER NHAB"/>
    <property type="match status" value="1"/>
</dbReference>
<dbReference type="PANTHER" id="PTHR43302">
    <property type="entry name" value="TRANSPORTER ARSB-RELATED"/>
    <property type="match status" value="1"/>
</dbReference>
<dbReference type="Pfam" id="PF06450">
    <property type="entry name" value="NhaB"/>
    <property type="match status" value="1"/>
</dbReference>
<sequence length="513" mass="56703">MEISWGRALWRNFLGQSPDWYKLALIIFLIVNPLIFLISPFVAGWLLVAEFIFTLAMALKCYPLLPGGLLAIEAVFIGMTSAEHVREEVAANLEVLLLLMFMVAGIYFMKQLLLFIFTRLLLSIRSKMLLSLSFCVAAAFLSAFLDALTVVAVVISVAVGFYGIYHRVASSRTEDTDLQDDSHIDKHYKVVLEQFRGFLRSLMMHAGVGTALGGVMTMVGEPQNLIIAKAAGWHFGDFFLRMSPVTVPVLICGLLTCLLVEKLRWFGYGETLPEKVREVLQQFDDQSRLQRTRQDKIRLIVQAIIGVWLVTALALHLAEVGLIGLSVIILATSLTGVTDEHAIGKAFTESLPFTALLTVFFSVVAVIIDQQLFSPIIQFVLQASEHAQLSLFYIFNGLLSSISDNVFVGTIYINEAKAAMKSGAITLKQYELLAVAINTGTNLPSVATPNGQAAFLFLLTSALAPLIRLSYGRMVWMALPYTLVLTLVGLLCVEFTLAPVTEWFMQMGWIATL</sequence>
<evidence type="ECO:0000255" key="1">
    <source>
        <dbReference type="HAMAP-Rule" id="MF_01599"/>
    </source>
</evidence>
<name>NHAB_ECO81</name>
<gene>
    <name evidence="1" type="primary">nhaB</name>
    <name type="ordered locus">ECED1_1328</name>
</gene>